<accession>Q9X6X9</accession>
<feature type="signal peptide" evidence="1">
    <location>
        <begin position="1"/>
        <end position="23"/>
    </location>
</feature>
<feature type="chain" id="PRO_0000314420" description="D-(-)-3-hydroxybutyrate oligomer hydrolase">
    <location>
        <begin position="24"/>
        <end position="741"/>
    </location>
</feature>
<feature type="region of interest" description="Disordered" evidence="2">
    <location>
        <begin position="45"/>
        <end position="68"/>
    </location>
</feature>
<feature type="active site" description="Charge relay system" evidence="1">
    <location>
        <position position="338"/>
    </location>
</feature>
<organism>
    <name type="scientific">Ralstonia pickettii</name>
    <name type="common">Burkholderia pickettii</name>
    <dbReference type="NCBI Taxonomy" id="329"/>
    <lineage>
        <taxon>Bacteria</taxon>
        <taxon>Pseudomonadati</taxon>
        <taxon>Pseudomonadota</taxon>
        <taxon>Betaproteobacteria</taxon>
        <taxon>Burkholderiales</taxon>
        <taxon>Burkholderiaceae</taxon>
        <taxon>Ralstonia</taxon>
    </lineage>
</organism>
<protein>
    <recommendedName>
        <fullName evidence="1">D-(-)-3-hydroxybutyrate oligomer hydrolase</fullName>
        <shortName evidence="1">3HB-oligomer hydrolase</shortName>
        <shortName evidence="1">3HBOH</shortName>
        <ecNumber evidence="1">3.1.1.22</ecNumber>
    </recommendedName>
    <alternativeName>
        <fullName>Extracellular 3HB-oligomer hydrolase</fullName>
        <shortName>e3HBOH</shortName>
    </alternativeName>
</protein>
<name>HBOH2_RALPI</name>
<reference key="1">
    <citation type="submission" date="1999-06" db="EMBL/GenBank/DDBJ databases">
        <authorList>
            <person name="Saito T."/>
        </authorList>
    </citation>
    <scope>NUCLEOTIDE SEQUENCE [GENOMIC DNA]</scope>
    <source>
        <strain>T1</strain>
    </source>
</reference>
<reference key="2">
    <citation type="journal article" date="2004" name="Curr. Microbiol.">
        <title>Roles of poly(3-hydroxybutyrate) depolymerase and 3HB-oligomer hydrolase in bacterial PHB metabolism.</title>
        <authorList>
            <person name="Sugiyama A."/>
            <person name="Kobayashi T."/>
            <person name="Shiraki M."/>
            <person name="Saito T."/>
        </authorList>
    </citation>
    <scope>FUNCTION</scope>
    <scope>SUBCELLULAR LOCATION</scope>
    <scope>BIOPHYSICOCHEMICAL PROPERTIES</scope>
    <scope>SUBSTRATE SPECIFICITY</scope>
    <source>
        <strain>T1</strain>
    </source>
</reference>
<keyword id="KW-0378">Hydrolase</keyword>
<keyword id="KW-0964">Secreted</keyword>
<keyword id="KW-0732">Signal</keyword>
<comment type="function">
    <text evidence="1 3">Participates in the degradation of poly-3-hydroxybutyrate (PHB). It works downstream of poly(3-hydroxybutyrate) depolymerase, hydrolyzing D(-)-3-hydroxybutyrate oligomers of various length (3HB-oligomers) into 3HB-monomers.</text>
</comment>
<comment type="catalytic activity">
    <reaction evidence="1">
        <text>(3R)-hydroxybutanoate dimer + H2O = 2 (R)-3-hydroxybutanoate + H(+)</text>
        <dbReference type="Rhea" id="RHEA:10172"/>
        <dbReference type="ChEBI" id="CHEBI:10979"/>
        <dbReference type="ChEBI" id="CHEBI:10983"/>
        <dbReference type="ChEBI" id="CHEBI:15377"/>
        <dbReference type="ChEBI" id="CHEBI:15378"/>
        <dbReference type="EC" id="3.1.1.22"/>
    </reaction>
</comment>
<comment type="biophysicochemical properties">
    <kinetics>
        <KM evidence="3">0.61 mM for linear 3HB-dimer</KM>
        <KM evidence="3">0.95 mM for linear 3HB-trimer</KM>
        <KM evidence="3">0.86 mM for cyclic 3HB-trimer</KM>
        <KM evidence="3">0.83 mM for linear 3HB-tetramer</KM>
        <KM evidence="3">0.88 mM for linear 3HB-pentamer</KM>
        <KM evidence="3">0.72 mM for cyclic 3HB-pentamer</KM>
        <KM evidence="3">0.62 mM for cyclic 3HB-hexamer</KM>
        <Vmax evidence="3">27.0 umol/min/mg enzyme with linear 3HB-dimer as substrate</Vmax>
        <Vmax evidence="3">37.0 umol/min/mg enzyme with linear 3HB-trimer as substrate</Vmax>
        <Vmax evidence="3">41.0 umol/min/mg enzyme with cyclic 3HB-trimer as substrate</Vmax>
        <Vmax evidence="3">42.0 umol/min/mg enzyme with linear 3HB-tetramer as substrate</Vmax>
        <Vmax evidence="3">57.0 umol/min/mg enzyme with linear 3HB-pentamer as substrate</Vmax>
        <Vmax evidence="3">41.0 umol/min/mg enzyme with cyclic 3HB-pentamer as substrate</Vmax>
        <Vmax evidence="3">42.0 umol/min/mg enzyme with cyclic 3HB-hexamer as substrate</Vmax>
    </kinetics>
</comment>
<comment type="pathway">
    <text evidence="1">Lipid metabolism; butanoate metabolism.</text>
</comment>
<comment type="subcellular location">
    <subcellularLocation>
        <location evidence="1 3">Secreted</location>
    </subcellularLocation>
</comment>
<comment type="similarity">
    <text evidence="1">Belongs to the D-(-)-3-hydroxybutyrate oligomer hydrolase family.</text>
</comment>
<sequence length="741" mass="75590">MKTIQGKSPGRWYSRGMLLAAMAASGVIGLAACGGGNDGNSAGNNGNAGGNGNNNGNNNGNTVSNTKPSFVGTVTVRRFDGVSDDLLTAGLGASGLASATAPAVANAVAPTAAELRRLTIYNNYRALIDTSAKGGYGTLYGPNVDADGNVTSGNGMVAGAEYVAYPDDGSGQQNVVLLVQIPDAFDAAHPCIITATSSGSRGIYGAISTGEWGLKRKCAVAYTDKGTGAGPHDLATDTVPLQDGTRTTRTLAGNTAQFAAPLAASRLAAFNVATPNRLAFKHAHSQRNPEKDWGLFTLQAVQFAFWAINDKLGISSGQTVSQLPVRPGNTIVIASSVSNGGGAAIAAAEQDTGNLIDGVAVGEPALSLPSSINVQVKRGGASLPINGKPLFDYVSYANEFRLCAALSASVASAPTQAYFGAALGWPASVQANRCAALHAKGLLSSTTTAAQADEALQKMRDYGWEPESDLLHASMAYFEIDPSVATTFGNALARASVFDNLCDLSFAAVDGSFHPATMNATVLAQLAATGNGVPPTTGVQLINNIAQGGAAQSRQSIDSSGTQAANLDGALCLRNLLSGSDAASQALQLGLSQTLRSGNLRGKPALIVQGRNDALLPVNHGARPYLGLNAQVDGSSKLSYIEVTNAQHFDGFIDLLPGYDSLFVPLAVYEQRALDAVYANLRSGTPLPPSQVVRTTPRGGAAGAAPPITAANVPNFTMTPAAGDRIQVSVSGGVATVSVPN</sequence>
<dbReference type="EC" id="3.1.1.22" evidence="1"/>
<dbReference type="EMBL" id="J04223">
    <property type="protein sequence ID" value="AAD36989.1"/>
    <property type="molecule type" value="Genomic_DNA"/>
</dbReference>
<dbReference type="ESTHER" id="ralpi-hboh2">
    <property type="family name" value="OHBut_olig_hydro_put"/>
</dbReference>
<dbReference type="SABIO-RK" id="Q9X6X9"/>
<dbReference type="UniPathway" id="UPA00863"/>
<dbReference type="GO" id="GO:0005615">
    <property type="term" value="C:extracellular space"/>
    <property type="evidence" value="ECO:0007669"/>
    <property type="project" value="InterPro"/>
</dbReference>
<dbReference type="GO" id="GO:0047989">
    <property type="term" value="F:hydroxybutyrate-dimer hydrolase activity"/>
    <property type="evidence" value="ECO:0007669"/>
    <property type="project" value="UniProtKB-UniRule"/>
</dbReference>
<dbReference type="GO" id="GO:0019605">
    <property type="term" value="P:butyrate metabolic process"/>
    <property type="evidence" value="ECO:0007669"/>
    <property type="project" value="UniProtKB-UniRule"/>
</dbReference>
<dbReference type="HAMAP" id="MF_01906">
    <property type="entry name" value="3HBOH"/>
    <property type="match status" value="1"/>
</dbReference>
<dbReference type="InterPro" id="IPR016582">
    <property type="entry name" value="OHBut_olig_hydro_put"/>
</dbReference>
<dbReference type="Pfam" id="PF10605">
    <property type="entry name" value="3HBOH"/>
    <property type="match status" value="1"/>
</dbReference>
<dbReference type="PIRSF" id="PIRSF011409">
    <property type="entry name" value="HObutyrate_olig_hydrol"/>
    <property type="match status" value="1"/>
</dbReference>
<evidence type="ECO:0000255" key="1">
    <source>
        <dbReference type="HAMAP-Rule" id="MF_01906"/>
    </source>
</evidence>
<evidence type="ECO:0000256" key="2">
    <source>
        <dbReference type="SAM" id="MobiDB-lite"/>
    </source>
</evidence>
<evidence type="ECO:0000269" key="3">
    <source>
    </source>
</evidence>
<proteinExistence type="evidence at protein level"/>